<proteinExistence type="inferred from homology"/>
<reference key="1">
    <citation type="journal article" date="2002" name="DNA Res.">
        <title>Complete genome structure of the thermophilic cyanobacterium Thermosynechococcus elongatus BP-1.</title>
        <authorList>
            <person name="Nakamura Y."/>
            <person name="Kaneko T."/>
            <person name="Sato S."/>
            <person name="Ikeuchi M."/>
            <person name="Katoh H."/>
            <person name="Sasamoto S."/>
            <person name="Watanabe A."/>
            <person name="Iriguchi M."/>
            <person name="Kawashima K."/>
            <person name="Kimura T."/>
            <person name="Kishida Y."/>
            <person name="Kiyokawa C."/>
            <person name="Kohara M."/>
            <person name="Matsumoto M."/>
            <person name="Matsuno A."/>
            <person name="Nakazaki N."/>
            <person name="Shimpo S."/>
            <person name="Sugimoto M."/>
            <person name="Takeuchi C."/>
            <person name="Yamada M."/>
            <person name="Tabata S."/>
        </authorList>
    </citation>
    <scope>NUCLEOTIDE SEQUENCE [LARGE SCALE GENOMIC DNA]</scope>
    <source>
        <strain>NIES-2133 / IAM M-273 / BP-1</strain>
    </source>
</reference>
<evidence type="ECO:0000255" key="1">
    <source>
        <dbReference type="HAMAP-Rule" id="MF_00267"/>
    </source>
</evidence>
<evidence type="ECO:0000256" key="2">
    <source>
        <dbReference type="SAM" id="MobiDB-lite"/>
    </source>
</evidence>
<keyword id="KW-0131">Cell cycle</keyword>
<keyword id="KW-0132">Cell division</keyword>
<keyword id="KW-1185">Reference proteome</keyword>
<keyword id="KW-0717">Septation</keyword>
<feature type="chain" id="PRO_0000189064" description="Probable septum site-determining protein MinC">
    <location>
        <begin position="1"/>
        <end position="266"/>
    </location>
</feature>
<feature type="region of interest" description="Disordered" evidence="2">
    <location>
        <begin position="1"/>
        <end position="28"/>
    </location>
</feature>
<feature type="compositionally biased region" description="Low complexity" evidence="2">
    <location>
        <begin position="1"/>
        <end position="21"/>
    </location>
</feature>
<sequence>MSEAESTPVEEPVVESTEGSEAIPEVEQSTPLVSGLTLEHCGGRYRLTLPSDLDWIDLWPQLQLYLVGQEHLWSETLPVDCACGQRLLDQSQLQQLAEALSEHQLRLDRIITGRRQTAIAAATLGYSVQQEELPPLLVKEADGPSQATANPLYLKTTLRSGIEIHHDASVIIVGDVNAGASIIAAGDIIVWGRLRGVAHAGAKGNLGARIMTLEMAATQLRIADLLARTPDPPRPPYPEVAYATDQGIQIAPAYTWGRVFAVSAAP</sequence>
<gene>
    <name evidence="1" type="primary">minC</name>
    <name type="ordered locus">tlr2016</name>
</gene>
<name>MINC_THEVB</name>
<comment type="function">
    <text evidence="1">Cell division inhibitor that blocks the formation of polar Z ring septums. Rapidly oscillates between the poles of the cell to destabilize FtsZ filaments that have formed before they mature into polar Z rings. Prevents FtsZ polymerization.</text>
</comment>
<comment type="subunit">
    <text evidence="1">Interacts with MinD and FtsZ.</text>
</comment>
<comment type="similarity">
    <text evidence="1">Belongs to the MinC family.</text>
</comment>
<accession>Q8DHE3</accession>
<dbReference type="EMBL" id="BA000039">
    <property type="protein sequence ID" value="BAC09568.1"/>
    <property type="molecule type" value="Genomic_DNA"/>
</dbReference>
<dbReference type="RefSeq" id="NP_682806.1">
    <property type="nucleotide sequence ID" value="NC_004113.1"/>
</dbReference>
<dbReference type="RefSeq" id="WP_011057851.1">
    <property type="nucleotide sequence ID" value="NC_004113.1"/>
</dbReference>
<dbReference type="SMR" id="Q8DHE3"/>
<dbReference type="STRING" id="197221.gene:10748625"/>
<dbReference type="EnsemblBacteria" id="BAC09568">
    <property type="protein sequence ID" value="BAC09568"/>
    <property type="gene ID" value="BAC09568"/>
</dbReference>
<dbReference type="KEGG" id="tel:tlr2016"/>
<dbReference type="PATRIC" id="fig|197221.4.peg.2109"/>
<dbReference type="eggNOG" id="COG0850">
    <property type="taxonomic scope" value="Bacteria"/>
</dbReference>
<dbReference type="Proteomes" id="UP000000440">
    <property type="component" value="Chromosome"/>
</dbReference>
<dbReference type="GO" id="GO:0000902">
    <property type="term" value="P:cell morphogenesis"/>
    <property type="evidence" value="ECO:0007669"/>
    <property type="project" value="InterPro"/>
</dbReference>
<dbReference type="GO" id="GO:0000917">
    <property type="term" value="P:division septum assembly"/>
    <property type="evidence" value="ECO:0007669"/>
    <property type="project" value="UniProtKB-KW"/>
</dbReference>
<dbReference type="GO" id="GO:1901891">
    <property type="term" value="P:regulation of cell septum assembly"/>
    <property type="evidence" value="ECO:0007669"/>
    <property type="project" value="InterPro"/>
</dbReference>
<dbReference type="Gene3D" id="2.160.20.70">
    <property type="match status" value="1"/>
</dbReference>
<dbReference type="HAMAP" id="MF_00267">
    <property type="entry name" value="MinC"/>
    <property type="match status" value="1"/>
</dbReference>
<dbReference type="InterPro" id="IPR016098">
    <property type="entry name" value="CAP/MinC_C"/>
</dbReference>
<dbReference type="InterPro" id="IPR013033">
    <property type="entry name" value="MinC"/>
</dbReference>
<dbReference type="InterPro" id="IPR036145">
    <property type="entry name" value="MinC_C_sf"/>
</dbReference>
<dbReference type="InterPro" id="IPR005526">
    <property type="entry name" value="Septum_form_inhib_MinC_C"/>
</dbReference>
<dbReference type="NCBIfam" id="NF001778">
    <property type="entry name" value="PRK00513.2-4"/>
    <property type="match status" value="1"/>
</dbReference>
<dbReference type="PANTHER" id="PTHR34108">
    <property type="entry name" value="SEPTUM SITE-DETERMINING PROTEIN MINC"/>
    <property type="match status" value="1"/>
</dbReference>
<dbReference type="PANTHER" id="PTHR34108:SF1">
    <property type="entry name" value="SEPTUM SITE-DETERMINING PROTEIN MINC"/>
    <property type="match status" value="1"/>
</dbReference>
<dbReference type="Pfam" id="PF03775">
    <property type="entry name" value="MinC_C"/>
    <property type="match status" value="1"/>
</dbReference>
<dbReference type="SUPFAM" id="SSF63848">
    <property type="entry name" value="Cell-division inhibitor MinC, C-terminal domain"/>
    <property type="match status" value="1"/>
</dbReference>
<protein>
    <recommendedName>
        <fullName evidence="1">Probable septum site-determining protein MinC</fullName>
    </recommendedName>
</protein>
<organism>
    <name type="scientific">Thermosynechococcus vestitus (strain NIES-2133 / IAM M-273 / BP-1)</name>
    <dbReference type="NCBI Taxonomy" id="197221"/>
    <lineage>
        <taxon>Bacteria</taxon>
        <taxon>Bacillati</taxon>
        <taxon>Cyanobacteriota</taxon>
        <taxon>Cyanophyceae</taxon>
        <taxon>Acaryochloridales</taxon>
        <taxon>Thermosynechococcaceae</taxon>
        <taxon>Thermosynechococcus</taxon>
    </lineage>
</organism>